<accession>B0SS41</accession>
<comment type="function">
    <text evidence="1">Catalyzes the sequential NAD-dependent oxidations of L-histidinol to L-histidinaldehyde and then to L-histidine.</text>
</comment>
<comment type="catalytic activity">
    <reaction evidence="1">
        <text>L-histidinol + 2 NAD(+) + H2O = L-histidine + 2 NADH + 3 H(+)</text>
        <dbReference type="Rhea" id="RHEA:20641"/>
        <dbReference type="ChEBI" id="CHEBI:15377"/>
        <dbReference type="ChEBI" id="CHEBI:15378"/>
        <dbReference type="ChEBI" id="CHEBI:57540"/>
        <dbReference type="ChEBI" id="CHEBI:57595"/>
        <dbReference type="ChEBI" id="CHEBI:57699"/>
        <dbReference type="ChEBI" id="CHEBI:57945"/>
        <dbReference type="EC" id="1.1.1.23"/>
    </reaction>
</comment>
<comment type="cofactor">
    <cofactor evidence="1">
        <name>Zn(2+)</name>
        <dbReference type="ChEBI" id="CHEBI:29105"/>
    </cofactor>
    <text evidence="1">Binds 1 zinc ion per subunit.</text>
</comment>
<comment type="pathway">
    <text evidence="1">Amino-acid biosynthesis; L-histidine biosynthesis; L-histidine from 5-phospho-alpha-D-ribose 1-diphosphate: step 9/9.</text>
</comment>
<comment type="similarity">
    <text evidence="1">Belongs to the histidinol dehydrogenase family.</text>
</comment>
<proteinExistence type="inferred from homology"/>
<reference key="1">
    <citation type="journal article" date="2008" name="PLoS ONE">
        <title>Genome sequence of the saprophyte Leptospira biflexa provides insights into the evolution of Leptospira and the pathogenesis of leptospirosis.</title>
        <authorList>
            <person name="Picardeau M."/>
            <person name="Bulach D.M."/>
            <person name="Bouchier C."/>
            <person name="Zuerner R.L."/>
            <person name="Zidane N."/>
            <person name="Wilson P.J."/>
            <person name="Creno S."/>
            <person name="Kuczek E.S."/>
            <person name="Bommezzadri S."/>
            <person name="Davis J.C."/>
            <person name="McGrath A."/>
            <person name="Johnson M.J."/>
            <person name="Boursaux-Eude C."/>
            <person name="Seemann T."/>
            <person name="Rouy Z."/>
            <person name="Coppel R.L."/>
            <person name="Rood J.I."/>
            <person name="Lajus A."/>
            <person name="Davies J.K."/>
            <person name="Medigue C."/>
            <person name="Adler B."/>
        </authorList>
    </citation>
    <scope>NUCLEOTIDE SEQUENCE [LARGE SCALE GENOMIC DNA]</scope>
    <source>
        <strain>Patoc 1 / ATCC 23582 / Paris</strain>
    </source>
</reference>
<sequence>MPIPILHCDRNSKELYSRFLQGAREDLTTATDRILPILESVRTQGDQALFSYTEMFDGIKLSQLTIDPKKIKTNVDEKTKEAFLRAKSNIEAFHMEQKRESWSKVIDGNRLGVKYTPIPSLAVYAPGGKALYPSSVLMGIIPAKIAGVPSIQLITPPQKDGIPEILVWLAQIMDIDRIVTVGGAQGIAAAAYGTESVPKSEFIVGPGNAYVAAAKSYLSGQGLIGIESPAGPSEVCIIADENANPKWIACDMLSQAEHGEDSSAILLTTDLTLAKRVSEELEIAFSERPKRLQMKQTAIYENSSILVFPTLDDCIWFSNELAPEHLEIQTKDYESVFAKIEHAGSVFLGPYSPVAMGDYISGTNHILPTARGSRIYSSLGVDTFLKRVTFQEVTKESLENLYPFVKLMSELEGLDEEHGTSVKVRTRQFQ</sequence>
<dbReference type="EC" id="1.1.1.23" evidence="1"/>
<dbReference type="EMBL" id="CP000786">
    <property type="protein sequence ID" value="ABZ97931.1"/>
    <property type="molecule type" value="Genomic_DNA"/>
</dbReference>
<dbReference type="RefSeq" id="WP_012388809.1">
    <property type="nucleotide sequence ID" value="NC_010602.1"/>
</dbReference>
<dbReference type="SMR" id="B0SS41"/>
<dbReference type="STRING" id="456481.LEPBI_I1825"/>
<dbReference type="KEGG" id="lbi:LEPBI_I1825"/>
<dbReference type="HOGENOM" id="CLU_006732_3_0_12"/>
<dbReference type="OrthoDB" id="9805269at2"/>
<dbReference type="BioCyc" id="LBIF456481:LEPBI_RS09020-MONOMER"/>
<dbReference type="UniPathway" id="UPA00031">
    <property type="reaction ID" value="UER00014"/>
</dbReference>
<dbReference type="Proteomes" id="UP000001847">
    <property type="component" value="Chromosome I"/>
</dbReference>
<dbReference type="GO" id="GO:0005829">
    <property type="term" value="C:cytosol"/>
    <property type="evidence" value="ECO:0007669"/>
    <property type="project" value="TreeGrafter"/>
</dbReference>
<dbReference type="GO" id="GO:0004399">
    <property type="term" value="F:histidinol dehydrogenase activity"/>
    <property type="evidence" value="ECO:0007669"/>
    <property type="project" value="UniProtKB-UniRule"/>
</dbReference>
<dbReference type="GO" id="GO:0051287">
    <property type="term" value="F:NAD binding"/>
    <property type="evidence" value="ECO:0007669"/>
    <property type="project" value="InterPro"/>
</dbReference>
<dbReference type="GO" id="GO:0008270">
    <property type="term" value="F:zinc ion binding"/>
    <property type="evidence" value="ECO:0007669"/>
    <property type="project" value="UniProtKB-UniRule"/>
</dbReference>
<dbReference type="GO" id="GO:0000105">
    <property type="term" value="P:L-histidine biosynthetic process"/>
    <property type="evidence" value="ECO:0007669"/>
    <property type="project" value="UniProtKB-UniRule"/>
</dbReference>
<dbReference type="CDD" id="cd06572">
    <property type="entry name" value="Histidinol_dh"/>
    <property type="match status" value="1"/>
</dbReference>
<dbReference type="FunFam" id="3.40.50.1980:FF:000001">
    <property type="entry name" value="Histidinol dehydrogenase"/>
    <property type="match status" value="1"/>
</dbReference>
<dbReference type="Gene3D" id="1.20.5.1300">
    <property type="match status" value="1"/>
</dbReference>
<dbReference type="Gene3D" id="3.40.50.1980">
    <property type="entry name" value="Nitrogenase molybdenum iron protein domain"/>
    <property type="match status" value="2"/>
</dbReference>
<dbReference type="HAMAP" id="MF_01024">
    <property type="entry name" value="HisD"/>
    <property type="match status" value="1"/>
</dbReference>
<dbReference type="InterPro" id="IPR016161">
    <property type="entry name" value="Ald_DH/histidinol_DH"/>
</dbReference>
<dbReference type="InterPro" id="IPR001692">
    <property type="entry name" value="Histidinol_DH_CS"/>
</dbReference>
<dbReference type="InterPro" id="IPR022695">
    <property type="entry name" value="Histidinol_DH_monofunct"/>
</dbReference>
<dbReference type="InterPro" id="IPR012131">
    <property type="entry name" value="Hstdl_DH"/>
</dbReference>
<dbReference type="NCBIfam" id="TIGR00069">
    <property type="entry name" value="hisD"/>
    <property type="match status" value="1"/>
</dbReference>
<dbReference type="PANTHER" id="PTHR21256:SF2">
    <property type="entry name" value="HISTIDINE BIOSYNTHESIS TRIFUNCTIONAL PROTEIN"/>
    <property type="match status" value="1"/>
</dbReference>
<dbReference type="PANTHER" id="PTHR21256">
    <property type="entry name" value="HISTIDINOL DEHYDROGENASE HDH"/>
    <property type="match status" value="1"/>
</dbReference>
<dbReference type="Pfam" id="PF00815">
    <property type="entry name" value="Histidinol_dh"/>
    <property type="match status" value="1"/>
</dbReference>
<dbReference type="PIRSF" id="PIRSF000099">
    <property type="entry name" value="Histidinol_dh"/>
    <property type="match status" value="1"/>
</dbReference>
<dbReference type="PRINTS" id="PR00083">
    <property type="entry name" value="HOLDHDRGNASE"/>
</dbReference>
<dbReference type="SUPFAM" id="SSF53720">
    <property type="entry name" value="ALDH-like"/>
    <property type="match status" value="1"/>
</dbReference>
<dbReference type="PROSITE" id="PS00611">
    <property type="entry name" value="HISOL_DEHYDROGENASE"/>
    <property type="match status" value="1"/>
</dbReference>
<protein>
    <recommendedName>
        <fullName evidence="1">Histidinol dehydrogenase</fullName>
        <shortName evidence="1">HDH</shortName>
        <ecNumber evidence="1">1.1.1.23</ecNumber>
    </recommendedName>
</protein>
<keyword id="KW-0028">Amino-acid biosynthesis</keyword>
<keyword id="KW-0368">Histidine biosynthesis</keyword>
<keyword id="KW-0479">Metal-binding</keyword>
<keyword id="KW-0520">NAD</keyword>
<keyword id="KW-0560">Oxidoreductase</keyword>
<keyword id="KW-1185">Reference proteome</keyword>
<keyword id="KW-0862">Zinc</keyword>
<evidence type="ECO:0000255" key="1">
    <source>
        <dbReference type="HAMAP-Rule" id="MF_01024"/>
    </source>
</evidence>
<gene>
    <name evidence="1" type="primary">hisD</name>
    <name type="ordered locus">LEPBI_I1825</name>
</gene>
<feature type="chain" id="PRO_1000135439" description="Histidinol dehydrogenase">
    <location>
        <begin position="1"/>
        <end position="430"/>
    </location>
</feature>
<feature type="active site" description="Proton acceptor" evidence="1">
    <location>
        <position position="324"/>
    </location>
</feature>
<feature type="active site" description="Proton acceptor" evidence="1">
    <location>
        <position position="325"/>
    </location>
</feature>
<feature type="binding site" evidence="1">
    <location>
        <position position="124"/>
    </location>
    <ligand>
        <name>NAD(+)</name>
        <dbReference type="ChEBI" id="CHEBI:57540"/>
    </ligand>
</feature>
<feature type="binding site" evidence="1">
    <location>
        <position position="185"/>
    </location>
    <ligand>
        <name>NAD(+)</name>
        <dbReference type="ChEBI" id="CHEBI:57540"/>
    </ligand>
</feature>
<feature type="binding site" evidence="1">
    <location>
        <position position="208"/>
    </location>
    <ligand>
        <name>NAD(+)</name>
        <dbReference type="ChEBI" id="CHEBI:57540"/>
    </ligand>
</feature>
<feature type="binding site" evidence="1">
    <location>
        <position position="233"/>
    </location>
    <ligand>
        <name>substrate</name>
    </ligand>
</feature>
<feature type="binding site" evidence="1">
    <location>
        <position position="255"/>
    </location>
    <ligand>
        <name>substrate</name>
    </ligand>
</feature>
<feature type="binding site" evidence="1">
    <location>
        <position position="255"/>
    </location>
    <ligand>
        <name>Zn(2+)</name>
        <dbReference type="ChEBI" id="CHEBI:29105"/>
    </ligand>
</feature>
<feature type="binding site" evidence="1">
    <location>
        <position position="258"/>
    </location>
    <ligand>
        <name>substrate</name>
    </ligand>
</feature>
<feature type="binding site" evidence="1">
    <location>
        <position position="258"/>
    </location>
    <ligand>
        <name>Zn(2+)</name>
        <dbReference type="ChEBI" id="CHEBI:29105"/>
    </ligand>
</feature>
<feature type="binding site" evidence="1">
    <location>
        <position position="325"/>
    </location>
    <ligand>
        <name>substrate</name>
    </ligand>
</feature>
<feature type="binding site" evidence="1">
    <location>
        <position position="358"/>
    </location>
    <ligand>
        <name>substrate</name>
    </ligand>
</feature>
<feature type="binding site" evidence="1">
    <location>
        <position position="358"/>
    </location>
    <ligand>
        <name>Zn(2+)</name>
        <dbReference type="ChEBI" id="CHEBI:29105"/>
    </ligand>
</feature>
<feature type="binding site" evidence="1">
    <location>
        <position position="412"/>
    </location>
    <ligand>
        <name>substrate</name>
    </ligand>
</feature>
<feature type="binding site" evidence="1">
    <location>
        <position position="418"/>
    </location>
    <ligand>
        <name>substrate</name>
    </ligand>
</feature>
<feature type="binding site" evidence="1">
    <location>
        <position position="418"/>
    </location>
    <ligand>
        <name>Zn(2+)</name>
        <dbReference type="ChEBI" id="CHEBI:29105"/>
    </ligand>
</feature>
<name>HISX_LEPBP</name>
<organism>
    <name type="scientific">Leptospira biflexa serovar Patoc (strain Patoc 1 / ATCC 23582 / Paris)</name>
    <dbReference type="NCBI Taxonomy" id="456481"/>
    <lineage>
        <taxon>Bacteria</taxon>
        <taxon>Pseudomonadati</taxon>
        <taxon>Spirochaetota</taxon>
        <taxon>Spirochaetia</taxon>
        <taxon>Leptospirales</taxon>
        <taxon>Leptospiraceae</taxon>
        <taxon>Leptospira</taxon>
    </lineage>
</organism>